<gene>
    <name evidence="1" type="primary">MAP2</name>
    <name type="ordered locus">CAALFM_C604080WA</name>
    <name type="ORF">CaO19.1214</name>
    <name type="ORF">CaO19.8802</name>
</gene>
<proteinExistence type="inferred from homology"/>
<evidence type="ECO:0000255" key="1">
    <source>
        <dbReference type="HAMAP-Rule" id="MF_03175"/>
    </source>
</evidence>
<evidence type="ECO:0000256" key="2">
    <source>
        <dbReference type="SAM" id="MobiDB-lite"/>
    </source>
</evidence>
<protein>
    <recommendedName>
        <fullName evidence="1">Methionine aminopeptidase 2</fullName>
        <shortName evidence="1">MAP 2</shortName>
        <shortName evidence="1">MetAP 2</shortName>
        <ecNumber evidence="1">3.4.11.18</ecNumber>
    </recommendedName>
    <alternativeName>
        <fullName evidence="1">Peptidase M</fullName>
    </alternativeName>
</protein>
<keyword id="KW-0031">Aminopeptidase</keyword>
<keyword id="KW-0963">Cytoplasm</keyword>
<keyword id="KW-0378">Hydrolase</keyword>
<keyword id="KW-0479">Metal-binding</keyword>
<keyword id="KW-0645">Protease</keyword>
<keyword id="KW-1185">Reference proteome</keyword>
<comment type="function">
    <text evidence="1">Cotranslationally removes the N-terminal methionine from nascent proteins. The N-terminal methionine is often cleaved when the second residue in the primary sequence is small and uncharged (Met-Ala-, Cys, Gly, Pro, Ser, Thr, or Val).</text>
</comment>
<comment type="catalytic activity">
    <reaction evidence="1">
        <text>Release of N-terminal amino acids, preferentially methionine, from peptides and arylamides.</text>
        <dbReference type="EC" id="3.4.11.18"/>
    </reaction>
</comment>
<comment type="cofactor">
    <cofactor evidence="1">
        <name>Co(2+)</name>
        <dbReference type="ChEBI" id="CHEBI:48828"/>
    </cofactor>
    <cofactor evidence="1">
        <name>Zn(2+)</name>
        <dbReference type="ChEBI" id="CHEBI:29105"/>
    </cofactor>
    <cofactor evidence="1">
        <name>Mn(2+)</name>
        <dbReference type="ChEBI" id="CHEBI:29035"/>
    </cofactor>
    <cofactor evidence="1">
        <name>Fe(2+)</name>
        <dbReference type="ChEBI" id="CHEBI:29033"/>
    </cofactor>
    <text evidence="1">Binds 2 divalent metal cations per subunit. Has a high-affinity and a low affinity metal-binding site. The true nature of the physiological cofactor is under debate. The enzyme is active with cobalt, zinc, manganese or divalent iron ions. Most likely, methionine aminopeptidases function as mononuclear Fe(2+)-metalloproteases under physiological conditions, and the catalytically relevant metal-binding site has been assigned to the histidine-containing high-affinity site.</text>
</comment>
<comment type="subcellular location">
    <subcellularLocation>
        <location evidence="1">Cytoplasm</location>
    </subcellularLocation>
</comment>
<comment type="similarity">
    <text evidence="1">Belongs to the peptidase M24A family. Methionine aminopeptidase eukaryotic type 2 subfamily.</text>
</comment>
<name>MAP2_CANAL</name>
<dbReference type="EC" id="3.4.11.18" evidence="1"/>
<dbReference type="EMBL" id="CP017628">
    <property type="protein sequence ID" value="AOW30329.1"/>
    <property type="molecule type" value="Genomic_DNA"/>
</dbReference>
<dbReference type="RefSeq" id="XP_710564.2">
    <property type="nucleotide sequence ID" value="XM_705472.2"/>
</dbReference>
<dbReference type="SMR" id="Q59LF9"/>
<dbReference type="FunCoup" id="Q59LF9">
    <property type="interactions" value="1224"/>
</dbReference>
<dbReference type="STRING" id="237561.Q59LF9"/>
<dbReference type="EnsemblFungi" id="C6_04080W_A-T">
    <property type="protein sequence ID" value="C6_04080W_A-T-p1"/>
    <property type="gene ID" value="C6_04080W_A"/>
</dbReference>
<dbReference type="GeneID" id="3647837"/>
<dbReference type="KEGG" id="cal:CAALFM_C604080WA"/>
<dbReference type="CGD" id="CAL0000186537">
    <property type="gene designation" value="orf19.8802"/>
</dbReference>
<dbReference type="VEuPathDB" id="FungiDB:C6_04080W_A"/>
<dbReference type="eggNOG" id="KOG2775">
    <property type="taxonomic scope" value="Eukaryota"/>
</dbReference>
<dbReference type="HOGENOM" id="CLU_015857_7_1_1"/>
<dbReference type="InParanoid" id="Q59LF9"/>
<dbReference type="OrthoDB" id="7848262at2759"/>
<dbReference type="PRO" id="PR:Q59LF9"/>
<dbReference type="Proteomes" id="UP000000559">
    <property type="component" value="Chromosome 6"/>
</dbReference>
<dbReference type="GO" id="GO:0005737">
    <property type="term" value="C:cytoplasm"/>
    <property type="evidence" value="ECO:0000318"/>
    <property type="project" value="GO_Central"/>
</dbReference>
<dbReference type="GO" id="GO:0004177">
    <property type="term" value="F:aminopeptidase activity"/>
    <property type="evidence" value="ECO:0000318"/>
    <property type="project" value="GO_Central"/>
</dbReference>
<dbReference type="GO" id="GO:0004239">
    <property type="term" value="F:initiator methionyl aminopeptidase activity"/>
    <property type="evidence" value="ECO:0007669"/>
    <property type="project" value="UniProtKB-UniRule"/>
</dbReference>
<dbReference type="GO" id="GO:0046872">
    <property type="term" value="F:metal ion binding"/>
    <property type="evidence" value="ECO:0007669"/>
    <property type="project" value="UniProtKB-UniRule"/>
</dbReference>
<dbReference type="GO" id="GO:0070006">
    <property type="term" value="F:metalloaminopeptidase activity"/>
    <property type="evidence" value="ECO:0007669"/>
    <property type="project" value="UniProtKB-UniRule"/>
</dbReference>
<dbReference type="GO" id="GO:0008235">
    <property type="term" value="F:metalloexopeptidase activity"/>
    <property type="evidence" value="ECO:0000318"/>
    <property type="project" value="GO_Central"/>
</dbReference>
<dbReference type="GO" id="GO:0051604">
    <property type="term" value="P:protein maturation"/>
    <property type="evidence" value="ECO:0007669"/>
    <property type="project" value="EnsemblFungi"/>
</dbReference>
<dbReference type="GO" id="GO:0006508">
    <property type="term" value="P:proteolysis"/>
    <property type="evidence" value="ECO:0007669"/>
    <property type="project" value="UniProtKB-KW"/>
</dbReference>
<dbReference type="CDD" id="cd01088">
    <property type="entry name" value="MetAP2"/>
    <property type="match status" value="1"/>
</dbReference>
<dbReference type="Gene3D" id="3.90.230.10">
    <property type="entry name" value="Creatinase/methionine aminopeptidase superfamily"/>
    <property type="match status" value="1"/>
</dbReference>
<dbReference type="Gene3D" id="1.10.10.10">
    <property type="entry name" value="Winged helix-like DNA-binding domain superfamily/Winged helix DNA-binding domain"/>
    <property type="match status" value="1"/>
</dbReference>
<dbReference type="HAMAP" id="MF_03175">
    <property type="entry name" value="MetAP_2_euk"/>
    <property type="match status" value="1"/>
</dbReference>
<dbReference type="InterPro" id="IPR036005">
    <property type="entry name" value="Creatinase/aminopeptidase-like"/>
</dbReference>
<dbReference type="InterPro" id="IPR050247">
    <property type="entry name" value="Met_Aminopeptidase_Type2"/>
</dbReference>
<dbReference type="InterPro" id="IPR000994">
    <property type="entry name" value="Pept_M24"/>
</dbReference>
<dbReference type="InterPro" id="IPR001714">
    <property type="entry name" value="Pept_M24_MAP"/>
</dbReference>
<dbReference type="InterPro" id="IPR002468">
    <property type="entry name" value="Pept_M24A_MAP2"/>
</dbReference>
<dbReference type="InterPro" id="IPR018349">
    <property type="entry name" value="Pept_M24A_MAP2_BS"/>
</dbReference>
<dbReference type="InterPro" id="IPR036388">
    <property type="entry name" value="WH-like_DNA-bd_sf"/>
</dbReference>
<dbReference type="InterPro" id="IPR036390">
    <property type="entry name" value="WH_DNA-bd_sf"/>
</dbReference>
<dbReference type="NCBIfam" id="TIGR00501">
    <property type="entry name" value="met_pdase_II"/>
    <property type="match status" value="1"/>
</dbReference>
<dbReference type="PANTHER" id="PTHR45777">
    <property type="entry name" value="METHIONINE AMINOPEPTIDASE 2"/>
    <property type="match status" value="1"/>
</dbReference>
<dbReference type="PANTHER" id="PTHR45777:SF2">
    <property type="entry name" value="METHIONINE AMINOPEPTIDASE 2"/>
    <property type="match status" value="1"/>
</dbReference>
<dbReference type="Pfam" id="PF00557">
    <property type="entry name" value="Peptidase_M24"/>
    <property type="match status" value="1"/>
</dbReference>
<dbReference type="PRINTS" id="PR00599">
    <property type="entry name" value="MAPEPTIDASE"/>
</dbReference>
<dbReference type="SUPFAM" id="SSF55920">
    <property type="entry name" value="Creatinase/aminopeptidase"/>
    <property type="match status" value="1"/>
</dbReference>
<dbReference type="SUPFAM" id="SSF46785">
    <property type="entry name" value="Winged helix' DNA-binding domain"/>
    <property type="match status" value="1"/>
</dbReference>
<dbReference type="PROSITE" id="PS01202">
    <property type="entry name" value="MAP_2"/>
    <property type="match status" value="1"/>
</dbReference>
<accession>Q59LF9</accession>
<accession>A0A1D8PQC1</accession>
<sequence>MAGVTEGEDTKVIESKINELNIDKPKLEDNNEAKGNGNGNESGDDDDDDKEEDDDNEITEPSTSTASGDEKKKKNKNKKKKKKKIVSIDSSYPEGIFPEGQWMEYPLEDINSYRTTSEEKRYLDRQQNNKWQDFRKGAEIHRRVRHKAQSSIRPGMTMIEIANLIEDSVRNYSGNDHTLKAGIGFPTGLSLNHVAAHYTPNTGDKLILKKDDIMKVDIGVHVNGRICDSAFTMTFNEDGKYDTIMQAVKEATYTGIKESGIDVRLNDIGAAIQEVMESYEMEENGKTYPIKCIKNLNGHNIDDFVIHSGKSVPIIANGDMTKMEEGETFAIETFGSTGNGYVLPEGECSHYAMNKGVEHLKPPSERSKQLLETIKQNFGTLPWCRRYLERTGEEKYLFALNQLVRHGIVEEYPPIVDKRGSYTAQFEHTILLHPHKKEVVTKGDDY</sequence>
<organism>
    <name type="scientific">Candida albicans (strain SC5314 / ATCC MYA-2876)</name>
    <name type="common">Yeast</name>
    <dbReference type="NCBI Taxonomy" id="237561"/>
    <lineage>
        <taxon>Eukaryota</taxon>
        <taxon>Fungi</taxon>
        <taxon>Dikarya</taxon>
        <taxon>Ascomycota</taxon>
        <taxon>Saccharomycotina</taxon>
        <taxon>Pichiomycetes</taxon>
        <taxon>Debaryomycetaceae</taxon>
        <taxon>Candida/Lodderomyces clade</taxon>
        <taxon>Candida</taxon>
    </lineage>
</organism>
<reference key="1">
    <citation type="journal article" date="2004" name="Proc. Natl. Acad. Sci. U.S.A.">
        <title>The diploid genome sequence of Candida albicans.</title>
        <authorList>
            <person name="Jones T."/>
            <person name="Federspiel N.A."/>
            <person name="Chibana H."/>
            <person name="Dungan J."/>
            <person name="Kalman S."/>
            <person name="Magee B.B."/>
            <person name="Newport G."/>
            <person name="Thorstenson Y.R."/>
            <person name="Agabian N."/>
            <person name="Magee P.T."/>
            <person name="Davis R.W."/>
            <person name="Scherer S."/>
        </authorList>
    </citation>
    <scope>NUCLEOTIDE SEQUENCE [LARGE SCALE GENOMIC DNA]</scope>
    <source>
        <strain>SC5314 / ATCC MYA-2876</strain>
    </source>
</reference>
<reference key="2">
    <citation type="journal article" date="2007" name="Genome Biol.">
        <title>Assembly of the Candida albicans genome into sixteen supercontigs aligned on the eight chromosomes.</title>
        <authorList>
            <person name="van het Hoog M."/>
            <person name="Rast T.J."/>
            <person name="Martchenko M."/>
            <person name="Grindle S."/>
            <person name="Dignard D."/>
            <person name="Hogues H."/>
            <person name="Cuomo C."/>
            <person name="Berriman M."/>
            <person name="Scherer S."/>
            <person name="Magee B.B."/>
            <person name="Whiteway M."/>
            <person name="Chibana H."/>
            <person name="Nantel A."/>
            <person name="Magee P.T."/>
        </authorList>
    </citation>
    <scope>GENOME REANNOTATION</scope>
    <source>
        <strain>SC5314 / ATCC MYA-2876</strain>
    </source>
</reference>
<reference key="3">
    <citation type="journal article" date="2013" name="Genome Biol.">
        <title>Assembly of a phased diploid Candida albicans genome facilitates allele-specific measurements and provides a simple model for repeat and indel structure.</title>
        <authorList>
            <person name="Muzzey D."/>
            <person name="Schwartz K."/>
            <person name="Weissman J.S."/>
            <person name="Sherlock G."/>
        </authorList>
    </citation>
    <scope>NUCLEOTIDE SEQUENCE [LARGE SCALE GENOMIC DNA]</scope>
    <scope>GENOME REANNOTATION</scope>
    <source>
        <strain>SC5314 / ATCC MYA-2876</strain>
    </source>
</reference>
<feature type="chain" id="PRO_0000407646" description="Methionine aminopeptidase 2">
    <location>
        <begin position="1"/>
        <end position="446"/>
    </location>
</feature>
<feature type="region of interest" description="Disordered" evidence="2">
    <location>
        <begin position="1"/>
        <end position="85"/>
    </location>
</feature>
<feature type="compositionally biased region" description="Basic and acidic residues" evidence="2">
    <location>
        <begin position="8"/>
        <end position="32"/>
    </location>
</feature>
<feature type="compositionally biased region" description="Acidic residues" evidence="2">
    <location>
        <begin position="42"/>
        <end position="58"/>
    </location>
</feature>
<feature type="compositionally biased region" description="Basic residues" evidence="2">
    <location>
        <begin position="73"/>
        <end position="85"/>
    </location>
</feature>
<feature type="binding site" evidence="1">
    <location>
        <position position="197"/>
    </location>
    <ligand>
        <name>substrate</name>
    </ligand>
</feature>
<feature type="binding site" evidence="1">
    <location>
        <position position="217"/>
    </location>
    <ligand>
        <name>a divalent metal cation</name>
        <dbReference type="ChEBI" id="CHEBI:60240"/>
        <label>1</label>
    </ligand>
</feature>
<feature type="binding site" evidence="1">
    <location>
        <position position="228"/>
    </location>
    <ligand>
        <name>a divalent metal cation</name>
        <dbReference type="ChEBI" id="CHEBI:60240"/>
        <label>1</label>
    </ligand>
</feature>
<feature type="binding site" evidence="1">
    <location>
        <position position="228"/>
    </location>
    <ligand>
        <name>a divalent metal cation</name>
        <dbReference type="ChEBI" id="CHEBI:60240"/>
        <label>2</label>
        <note>catalytic</note>
    </ligand>
</feature>
<feature type="binding site" evidence="1">
    <location>
        <position position="299"/>
    </location>
    <ligand>
        <name>a divalent metal cation</name>
        <dbReference type="ChEBI" id="CHEBI:60240"/>
        <label>2</label>
        <note>catalytic</note>
    </ligand>
</feature>
<feature type="binding site" evidence="1">
    <location>
        <position position="307"/>
    </location>
    <ligand>
        <name>substrate</name>
    </ligand>
</feature>
<feature type="binding site" evidence="1">
    <location>
        <position position="332"/>
    </location>
    <ligand>
        <name>a divalent metal cation</name>
        <dbReference type="ChEBI" id="CHEBI:60240"/>
        <label>2</label>
        <note>catalytic</note>
    </ligand>
</feature>
<feature type="binding site" evidence="1">
    <location>
        <position position="427"/>
    </location>
    <ligand>
        <name>a divalent metal cation</name>
        <dbReference type="ChEBI" id="CHEBI:60240"/>
        <label>1</label>
    </ligand>
</feature>
<feature type="binding site" evidence="1">
    <location>
        <position position="427"/>
    </location>
    <ligand>
        <name>a divalent metal cation</name>
        <dbReference type="ChEBI" id="CHEBI:60240"/>
        <label>2</label>
        <note>catalytic</note>
    </ligand>
</feature>